<gene>
    <name type="primary">rpsA</name>
    <name type="ordered locus">SAS1417</name>
</gene>
<sequence length="391" mass="43287">MTEEFNESMINDIKEGDKVTGEVQQVEDKQVVVHINGGKFNGIIPISQLSTHHIDSPSEVVKEGDEVEAYVTKVEFDEENETGAYILSRRQLETEKSYSYLQEKLDNNEIIEAKVTEVVKGGLVVDVGQRGFVPASLISTDFIEDFSVFDGQTIRIKVEELDPENNRVILSRKAVEQEENDAKKDQLLQSLNEGDVIDGKVARLTQFGAFIDIGGVDGLVHVSELSHEHVQTPEEVVSIGQDVKVKIKSIDRDTERISLSIKDTLPTPFENIKGQFHENDVIEGVVVRLANFGAFVEIAPGVQGLVHISEIAHKHIGTPGEVLEPGQQVNVKILGIDEENERVSLSIKATLPNEDVVESDPSTTKAYLENEEEDNPTIGDMIGDKLKNLKL</sequence>
<name>RS1_STAAS</name>
<organism>
    <name type="scientific">Staphylococcus aureus (strain MSSA476)</name>
    <dbReference type="NCBI Taxonomy" id="282459"/>
    <lineage>
        <taxon>Bacteria</taxon>
        <taxon>Bacillati</taxon>
        <taxon>Bacillota</taxon>
        <taxon>Bacilli</taxon>
        <taxon>Bacillales</taxon>
        <taxon>Staphylococcaceae</taxon>
        <taxon>Staphylococcus</taxon>
    </lineage>
</organism>
<reference key="1">
    <citation type="journal article" date="2004" name="Proc. Natl. Acad. Sci. U.S.A.">
        <title>Complete genomes of two clinical Staphylococcus aureus strains: evidence for the rapid evolution of virulence and drug resistance.</title>
        <authorList>
            <person name="Holden M.T.G."/>
            <person name="Feil E.J."/>
            <person name="Lindsay J.A."/>
            <person name="Peacock S.J."/>
            <person name="Day N.P.J."/>
            <person name="Enright M.C."/>
            <person name="Foster T.J."/>
            <person name="Moore C.E."/>
            <person name="Hurst L."/>
            <person name="Atkin R."/>
            <person name="Barron A."/>
            <person name="Bason N."/>
            <person name="Bentley S.D."/>
            <person name="Chillingworth C."/>
            <person name="Chillingworth T."/>
            <person name="Churcher C."/>
            <person name="Clark L."/>
            <person name="Corton C."/>
            <person name="Cronin A."/>
            <person name="Doggett J."/>
            <person name="Dowd L."/>
            <person name="Feltwell T."/>
            <person name="Hance Z."/>
            <person name="Harris B."/>
            <person name="Hauser H."/>
            <person name="Holroyd S."/>
            <person name="Jagels K."/>
            <person name="James K.D."/>
            <person name="Lennard N."/>
            <person name="Line A."/>
            <person name="Mayes R."/>
            <person name="Moule S."/>
            <person name="Mungall K."/>
            <person name="Ormond D."/>
            <person name="Quail M.A."/>
            <person name="Rabbinowitsch E."/>
            <person name="Rutherford K.M."/>
            <person name="Sanders M."/>
            <person name="Sharp S."/>
            <person name="Simmonds M."/>
            <person name="Stevens K."/>
            <person name="Whitehead S."/>
            <person name="Barrell B.G."/>
            <person name="Spratt B.G."/>
            <person name="Parkhill J."/>
        </authorList>
    </citation>
    <scope>NUCLEOTIDE SEQUENCE [LARGE SCALE GENOMIC DNA]</scope>
    <source>
        <strain>MSSA476</strain>
    </source>
</reference>
<feature type="chain" id="PRO_0000196051" description="Small ribosomal subunit protein bS1">
    <location>
        <begin position="1"/>
        <end position="391"/>
    </location>
</feature>
<feature type="domain" description="S1 motif 1" evidence="2">
    <location>
        <begin position="16"/>
        <end position="90"/>
    </location>
</feature>
<feature type="domain" description="S1 motif 2" evidence="2">
    <location>
        <begin position="108"/>
        <end position="173"/>
    </location>
</feature>
<feature type="domain" description="S1 motif 3" evidence="2">
    <location>
        <begin position="194"/>
        <end position="262"/>
    </location>
</feature>
<feature type="domain" description="S1 motif 4" evidence="2">
    <location>
        <begin position="279"/>
        <end position="348"/>
    </location>
</feature>
<evidence type="ECO:0000250" key="1"/>
<evidence type="ECO:0000255" key="2">
    <source>
        <dbReference type="PROSITE-ProRule" id="PRU00180"/>
    </source>
</evidence>
<evidence type="ECO:0000305" key="3"/>
<dbReference type="EMBL" id="BX571857">
    <property type="protein sequence ID" value="CAG43194.1"/>
    <property type="molecule type" value="Genomic_DNA"/>
</dbReference>
<dbReference type="RefSeq" id="WP_000133954.1">
    <property type="nucleotide sequence ID" value="NC_002953.3"/>
</dbReference>
<dbReference type="SMR" id="Q6G987"/>
<dbReference type="KEGG" id="sas:SAS1417"/>
<dbReference type="HOGENOM" id="CLU_015805_4_5_9"/>
<dbReference type="GO" id="GO:0022627">
    <property type="term" value="C:cytosolic small ribosomal subunit"/>
    <property type="evidence" value="ECO:0007669"/>
    <property type="project" value="TreeGrafter"/>
</dbReference>
<dbReference type="GO" id="GO:0003729">
    <property type="term" value="F:mRNA binding"/>
    <property type="evidence" value="ECO:0007669"/>
    <property type="project" value="TreeGrafter"/>
</dbReference>
<dbReference type="GO" id="GO:0003735">
    <property type="term" value="F:structural constituent of ribosome"/>
    <property type="evidence" value="ECO:0007669"/>
    <property type="project" value="TreeGrafter"/>
</dbReference>
<dbReference type="GO" id="GO:0006412">
    <property type="term" value="P:translation"/>
    <property type="evidence" value="ECO:0007669"/>
    <property type="project" value="TreeGrafter"/>
</dbReference>
<dbReference type="CDD" id="cd05687">
    <property type="entry name" value="S1_RPS1_repeat_ec1_hs1"/>
    <property type="match status" value="1"/>
</dbReference>
<dbReference type="CDD" id="cd04465">
    <property type="entry name" value="S1_RPS1_repeat_ec2_hs2"/>
    <property type="match status" value="1"/>
</dbReference>
<dbReference type="CDD" id="cd05688">
    <property type="entry name" value="S1_RPS1_repeat_ec3"/>
    <property type="match status" value="1"/>
</dbReference>
<dbReference type="FunFam" id="2.40.50.140:FF:000114">
    <property type="entry name" value="30S ribosomal protein S1"/>
    <property type="match status" value="2"/>
</dbReference>
<dbReference type="FunFam" id="2.40.50.140:FF:000166">
    <property type="entry name" value="30S ribosomal protein S1"/>
    <property type="match status" value="1"/>
</dbReference>
<dbReference type="FunFam" id="2.40.50.140:FF:000182">
    <property type="entry name" value="30S ribosomal protein S1"/>
    <property type="match status" value="1"/>
</dbReference>
<dbReference type="Gene3D" id="2.40.50.140">
    <property type="entry name" value="Nucleic acid-binding proteins"/>
    <property type="match status" value="4"/>
</dbReference>
<dbReference type="InterPro" id="IPR012340">
    <property type="entry name" value="NA-bd_OB-fold"/>
</dbReference>
<dbReference type="InterPro" id="IPR050437">
    <property type="entry name" value="Ribos_protein_bS1-like"/>
</dbReference>
<dbReference type="InterPro" id="IPR035104">
    <property type="entry name" value="Ribosomal_protein_S1-like"/>
</dbReference>
<dbReference type="InterPro" id="IPR003029">
    <property type="entry name" value="S1_domain"/>
</dbReference>
<dbReference type="NCBIfam" id="NF005208">
    <property type="entry name" value="PRK06676.1"/>
    <property type="match status" value="1"/>
</dbReference>
<dbReference type="PANTHER" id="PTHR10724">
    <property type="entry name" value="30S RIBOSOMAL PROTEIN S1"/>
    <property type="match status" value="1"/>
</dbReference>
<dbReference type="PANTHER" id="PTHR10724:SF7">
    <property type="entry name" value="SMALL RIBOSOMAL SUBUNIT PROTEIN BS1C"/>
    <property type="match status" value="1"/>
</dbReference>
<dbReference type="Pfam" id="PF00575">
    <property type="entry name" value="S1"/>
    <property type="match status" value="4"/>
</dbReference>
<dbReference type="PRINTS" id="PR00681">
    <property type="entry name" value="RIBOSOMALS1"/>
</dbReference>
<dbReference type="SMART" id="SM00316">
    <property type="entry name" value="S1"/>
    <property type="match status" value="4"/>
</dbReference>
<dbReference type="SUPFAM" id="SSF50249">
    <property type="entry name" value="Nucleic acid-binding proteins"/>
    <property type="match status" value="4"/>
</dbReference>
<dbReference type="PROSITE" id="PS50126">
    <property type="entry name" value="S1"/>
    <property type="match status" value="4"/>
</dbReference>
<keyword id="KW-0677">Repeat</keyword>
<keyword id="KW-0687">Ribonucleoprotein</keyword>
<keyword id="KW-0689">Ribosomal protein</keyword>
<keyword id="KW-0694">RNA-binding</keyword>
<accession>Q6G987</accession>
<comment type="function">
    <text evidence="1">Binds mRNA; thus facilitating recognition of the initiation point. It is needed to translate mRNA with a short Shine-Dalgarno (SD) purine-rich sequence (By similarity).</text>
</comment>
<comment type="similarity">
    <text evidence="3">Belongs to the bacterial ribosomal protein bS1 family.</text>
</comment>
<proteinExistence type="inferred from homology"/>
<protein>
    <recommendedName>
        <fullName evidence="3">Small ribosomal subunit protein bS1</fullName>
    </recommendedName>
    <alternativeName>
        <fullName>30S ribosomal protein S1</fullName>
    </alternativeName>
</protein>